<comment type="similarity">
    <text evidence="1">Belongs to the bacterial ribosomal protein bL27 family.</text>
</comment>
<comment type="sequence caution" evidence="3">
    <conflict type="frameshift">
        <sequence resource="EMBL-CDS" id="AAL51384"/>
    </conflict>
</comment>
<accession>Q8YJ84</accession>
<proteinExistence type="inferred from homology"/>
<evidence type="ECO:0000255" key="1">
    <source>
        <dbReference type="HAMAP-Rule" id="MF_00539"/>
    </source>
</evidence>
<evidence type="ECO:0000256" key="2">
    <source>
        <dbReference type="SAM" id="MobiDB-lite"/>
    </source>
</evidence>
<evidence type="ECO:0000305" key="3"/>
<sequence length="89" mass="9407">MAHTKKGGSSRNGRDSESKRLGVKKFGGEAVLAGNIIVRQRGTKWHPGANVGLGKDHTIFATVNGSVSFRTKANGRTYVSVNPIAEAAE</sequence>
<protein>
    <recommendedName>
        <fullName evidence="1">Large ribosomal subunit protein bL27</fullName>
    </recommendedName>
    <alternativeName>
        <fullName evidence="3">50S ribosomal protein L27</fullName>
    </alternativeName>
</protein>
<dbReference type="EMBL" id="AE008917">
    <property type="protein sequence ID" value="AAL51384.1"/>
    <property type="status" value="ALT_FRAME"/>
    <property type="molecule type" value="Genomic_DNA"/>
</dbReference>
<dbReference type="PIR" id="AE3277">
    <property type="entry name" value="AE3277"/>
</dbReference>
<dbReference type="SMR" id="Q8YJ84"/>
<dbReference type="KEGG" id="bme:BMEI0202"/>
<dbReference type="eggNOG" id="COG0211">
    <property type="taxonomic scope" value="Bacteria"/>
</dbReference>
<dbReference type="Proteomes" id="UP000000419">
    <property type="component" value="Chromosome I"/>
</dbReference>
<dbReference type="GO" id="GO:0022625">
    <property type="term" value="C:cytosolic large ribosomal subunit"/>
    <property type="evidence" value="ECO:0007669"/>
    <property type="project" value="TreeGrafter"/>
</dbReference>
<dbReference type="GO" id="GO:0003735">
    <property type="term" value="F:structural constituent of ribosome"/>
    <property type="evidence" value="ECO:0007669"/>
    <property type="project" value="InterPro"/>
</dbReference>
<dbReference type="GO" id="GO:0006412">
    <property type="term" value="P:translation"/>
    <property type="evidence" value="ECO:0007669"/>
    <property type="project" value="UniProtKB-UniRule"/>
</dbReference>
<dbReference type="FunFam" id="2.40.50.100:FF:000020">
    <property type="entry name" value="50S ribosomal protein L27"/>
    <property type="match status" value="1"/>
</dbReference>
<dbReference type="Gene3D" id="2.40.50.100">
    <property type="match status" value="1"/>
</dbReference>
<dbReference type="HAMAP" id="MF_00539">
    <property type="entry name" value="Ribosomal_bL27"/>
    <property type="match status" value="1"/>
</dbReference>
<dbReference type="InterPro" id="IPR001684">
    <property type="entry name" value="Ribosomal_bL27"/>
</dbReference>
<dbReference type="InterPro" id="IPR018261">
    <property type="entry name" value="Ribosomal_bL27_CS"/>
</dbReference>
<dbReference type="NCBIfam" id="TIGR00062">
    <property type="entry name" value="L27"/>
    <property type="match status" value="1"/>
</dbReference>
<dbReference type="PANTHER" id="PTHR15893:SF0">
    <property type="entry name" value="LARGE RIBOSOMAL SUBUNIT PROTEIN BL27M"/>
    <property type="match status" value="1"/>
</dbReference>
<dbReference type="PANTHER" id="PTHR15893">
    <property type="entry name" value="RIBOSOMAL PROTEIN L27"/>
    <property type="match status" value="1"/>
</dbReference>
<dbReference type="Pfam" id="PF01016">
    <property type="entry name" value="Ribosomal_L27"/>
    <property type="match status" value="1"/>
</dbReference>
<dbReference type="PRINTS" id="PR00063">
    <property type="entry name" value="RIBOSOMALL27"/>
</dbReference>
<dbReference type="SUPFAM" id="SSF110324">
    <property type="entry name" value="Ribosomal L27 protein-like"/>
    <property type="match status" value="1"/>
</dbReference>
<dbReference type="PROSITE" id="PS00831">
    <property type="entry name" value="RIBOSOMAL_L27"/>
    <property type="match status" value="1"/>
</dbReference>
<organism>
    <name type="scientific">Brucella melitensis biotype 1 (strain ATCC 23456 / CCUG 17765 / NCTC 10094 / 16M)</name>
    <dbReference type="NCBI Taxonomy" id="224914"/>
    <lineage>
        <taxon>Bacteria</taxon>
        <taxon>Pseudomonadati</taxon>
        <taxon>Pseudomonadota</taxon>
        <taxon>Alphaproteobacteria</taxon>
        <taxon>Hyphomicrobiales</taxon>
        <taxon>Brucellaceae</taxon>
        <taxon>Brucella/Ochrobactrum group</taxon>
        <taxon>Brucella</taxon>
    </lineage>
</organism>
<name>RL27_BRUME</name>
<keyword id="KW-0687">Ribonucleoprotein</keyword>
<keyword id="KW-0689">Ribosomal protein</keyword>
<gene>
    <name evidence="1" type="primary">rpmA</name>
    <name type="ordered locus">BMEI0202</name>
</gene>
<reference key="1">
    <citation type="journal article" date="2002" name="Proc. Natl. Acad. Sci. U.S.A.">
        <title>The genome sequence of the facultative intracellular pathogen Brucella melitensis.</title>
        <authorList>
            <person name="DelVecchio V.G."/>
            <person name="Kapatral V."/>
            <person name="Redkar R.J."/>
            <person name="Patra G."/>
            <person name="Mujer C."/>
            <person name="Los T."/>
            <person name="Ivanova N."/>
            <person name="Anderson I."/>
            <person name="Bhattacharyya A."/>
            <person name="Lykidis A."/>
            <person name="Reznik G."/>
            <person name="Jablonski L."/>
            <person name="Larsen N."/>
            <person name="D'Souza M."/>
            <person name="Bernal A."/>
            <person name="Mazur M."/>
            <person name="Goltsman E."/>
            <person name="Selkov E."/>
            <person name="Elzer P.H."/>
            <person name="Hagius S."/>
            <person name="O'Callaghan D."/>
            <person name="Letesson J.-J."/>
            <person name="Haselkorn R."/>
            <person name="Kyrpides N.C."/>
            <person name="Overbeek R."/>
        </authorList>
    </citation>
    <scope>NUCLEOTIDE SEQUENCE [LARGE SCALE GENOMIC DNA]</scope>
    <source>
        <strain>ATCC 23456 / CCUG 17765 / NCTC 10094 / 16M</strain>
    </source>
</reference>
<feature type="chain" id="PRO_0000181057" description="Large ribosomal subunit protein bL27">
    <location>
        <begin position="1"/>
        <end position="89"/>
    </location>
</feature>
<feature type="region of interest" description="Disordered" evidence="2">
    <location>
        <begin position="1"/>
        <end position="22"/>
    </location>
</feature>